<accession>Q7UFX8</accession>
<sequence length="325" mass="36497">MTASQPLDQADQDSESSSAGSSAAETEHVSVMPNEIVQWVREINPTTIIDGTYGGGGHTRLLAEVLADAGSDSDTPRVIAIDRDPAVVRRDEQKSWIKDDPRIELFLGSYESSPKALDALDLTHADALVLDLGLSSDQLADRNRGFTFTIDDAELDLRFDPENGVPAHRWLQQHSEKEIADAIYRFGEERFSRRIAKQIFLRARERNPVTKVGELVEICRRCVPRSRNHDIHPATRTFQALRIAVNDELGGLTRTLQSAPDWIAPGGRVAVISFHSLEDRIVKNAFREDHRWEILTKKPLRPTDEEVQANPRSRSAKLRVAKRVE</sequence>
<dbReference type="EC" id="2.1.1.199" evidence="1"/>
<dbReference type="EMBL" id="BX294147">
    <property type="protein sequence ID" value="CAD78551.1"/>
    <property type="molecule type" value="Genomic_DNA"/>
</dbReference>
<dbReference type="RefSeq" id="NP_868273.1">
    <property type="nucleotide sequence ID" value="NC_005027.1"/>
</dbReference>
<dbReference type="RefSeq" id="WP_011121784.1">
    <property type="nucleotide sequence ID" value="NC_005027.1"/>
</dbReference>
<dbReference type="SMR" id="Q7UFX8"/>
<dbReference type="FunCoup" id="Q7UFX8">
    <property type="interactions" value="515"/>
</dbReference>
<dbReference type="STRING" id="243090.RB8268"/>
<dbReference type="EnsemblBacteria" id="CAD78551">
    <property type="protein sequence ID" value="CAD78551"/>
    <property type="gene ID" value="RB8268"/>
</dbReference>
<dbReference type="KEGG" id="rba:RB8268"/>
<dbReference type="PATRIC" id="fig|243090.15.peg.3983"/>
<dbReference type="eggNOG" id="COG0275">
    <property type="taxonomic scope" value="Bacteria"/>
</dbReference>
<dbReference type="HOGENOM" id="CLU_038422_3_0_0"/>
<dbReference type="InParanoid" id="Q7UFX8"/>
<dbReference type="OrthoDB" id="9806637at2"/>
<dbReference type="Proteomes" id="UP000001025">
    <property type="component" value="Chromosome"/>
</dbReference>
<dbReference type="GO" id="GO:0005737">
    <property type="term" value="C:cytoplasm"/>
    <property type="evidence" value="ECO:0000318"/>
    <property type="project" value="GO_Central"/>
</dbReference>
<dbReference type="GO" id="GO:0071424">
    <property type="term" value="F:rRNA (cytosine-N4-)-methyltransferase activity"/>
    <property type="evidence" value="ECO:0000318"/>
    <property type="project" value="GO_Central"/>
</dbReference>
<dbReference type="GO" id="GO:0070475">
    <property type="term" value="P:rRNA base methylation"/>
    <property type="evidence" value="ECO:0000318"/>
    <property type="project" value="GO_Central"/>
</dbReference>
<dbReference type="Gene3D" id="1.10.150.170">
    <property type="entry name" value="Putative methyltransferase TM0872, insert domain"/>
    <property type="match status" value="1"/>
</dbReference>
<dbReference type="Gene3D" id="3.40.50.150">
    <property type="entry name" value="Vaccinia Virus protein VP39"/>
    <property type="match status" value="1"/>
</dbReference>
<dbReference type="HAMAP" id="MF_01007">
    <property type="entry name" value="16SrRNA_methyltr_H"/>
    <property type="match status" value="1"/>
</dbReference>
<dbReference type="InterPro" id="IPR002903">
    <property type="entry name" value="RsmH"/>
</dbReference>
<dbReference type="InterPro" id="IPR023397">
    <property type="entry name" value="SAM-dep_MeTrfase_MraW_recog"/>
</dbReference>
<dbReference type="InterPro" id="IPR029063">
    <property type="entry name" value="SAM-dependent_MTases_sf"/>
</dbReference>
<dbReference type="NCBIfam" id="TIGR00006">
    <property type="entry name" value="16S rRNA (cytosine(1402)-N(4))-methyltransferase RsmH"/>
    <property type="match status" value="1"/>
</dbReference>
<dbReference type="PANTHER" id="PTHR11265:SF0">
    <property type="entry name" value="12S RRNA N4-METHYLCYTIDINE METHYLTRANSFERASE"/>
    <property type="match status" value="1"/>
</dbReference>
<dbReference type="PANTHER" id="PTHR11265">
    <property type="entry name" value="S-ADENOSYL-METHYLTRANSFERASE MRAW"/>
    <property type="match status" value="1"/>
</dbReference>
<dbReference type="Pfam" id="PF01795">
    <property type="entry name" value="Methyltransf_5"/>
    <property type="match status" value="1"/>
</dbReference>
<dbReference type="PIRSF" id="PIRSF004486">
    <property type="entry name" value="MraW"/>
    <property type="match status" value="1"/>
</dbReference>
<dbReference type="SUPFAM" id="SSF81799">
    <property type="entry name" value="Putative methyltransferase TM0872, insert domain"/>
    <property type="match status" value="1"/>
</dbReference>
<dbReference type="SUPFAM" id="SSF53335">
    <property type="entry name" value="S-adenosyl-L-methionine-dependent methyltransferases"/>
    <property type="match status" value="1"/>
</dbReference>
<reference key="1">
    <citation type="journal article" date="2003" name="Proc. Natl. Acad. Sci. U.S.A.">
        <title>Complete genome sequence of the marine planctomycete Pirellula sp. strain 1.</title>
        <authorList>
            <person name="Gloeckner F.O."/>
            <person name="Kube M."/>
            <person name="Bauer M."/>
            <person name="Teeling H."/>
            <person name="Lombardot T."/>
            <person name="Ludwig W."/>
            <person name="Gade D."/>
            <person name="Beck A."/>
            <person name="Borzym K."/>
            <person name="Heitmann K."/>
            <person name="Rabus R."/>
            <person name="Schlesner H."/>
            <person name="Amann R."/>
            <person name="Reinhardt R."/>
        </authorList>
    </citation>
    <scope>NUCLEOTIDE SEQUENCE [LARGE SCALE GENOMIC DNA]</scope>
    <source>
        <strain>DSM 10527 / NCIMB 13988 / SH1</strain>
    </source>
</reference>
<gene>
    <name evidence="1" type="primary">rsmH</name>
    <name type="synonym">mraW</name>
    <name type="ordered locus">RB8268</name>
</gene>
<keyword id="KW-0963">Cytoplasm</keyword>
<keyword id="KW-0489">Methyltransferase</keyword>
<keyword id="KW-1185">Reference proteome</keyword>
<keyword id="KW-0698">rRNA processing</keyword>
<keyword id="KW-0949">S-adenosyl-L-methionine</keyword>
<keyword id="KW-0808">Transferase</keyword>
<name>RSMH_RHOBA</name>
<organism>
    <name type="scientific">Rhodopirellula baltica (strain DSM 10527 / NCIMB 13988 / SH1)</name>
    <dbReference type="NCBI Taxonomy" id="243090"/>
    <lineage>
        <taxon>Bacteria</taxon>
        <taxon>Pseudomonadati</taxon>
        <taxon>Planctomycetota</taxon>
        <taxon>Planctomycetia</taxon>
        <taxon>Pirellulales</taxon>
        <taxon>Pirellulaceae</taxon>
        <taxon>Rhodopirellula</taxon>
    </lineage>
</organism>
<proteinExistence type="inferred from homology"/>
<feature type="chain" id="PRO_0000108691" description="Ribosomal RNA small subunit methyltransferase H">
    <location>
        <begin position="1"/>
        <end position="325"/>
    </location>
</feature>
<feature type="region of interest" description="Disordered" evidence="2">
    <location>
        <begin position="1"/>
        <end position="28"/>
    </location>
</feature>
<feature type="region of interest" description="Disordered" evidence="2">
    <location>
        <begin position="303"/>
        <end position="325"/>
    </location>
</feature>
<feature type="compositionally biased region" description="Low complexity" evidence="2">
    <location>
        <begin position="15"/>
        <end position="24"/>
    </location>
</feature>
<feature type="compositionally biased region" description="Basic residues" evidence="2">
    <location>
        <begin position="314"/>
        <end position="325"/>
    </location>
</feature>
<feature type="binding site" evidence="1">
    <location>
        <begin position="56"/>
        <end position="58"/>
    </location>
    <ligand>
        <name>S-adenosyl-L-methionine</name>
        <dbReference type="ChEBI" id="CHEBI:59789"/>
    </ligand>
</feature>
<feature type="binding site" evidence="1">
    <location>
        <position position="82"/>
    </location>
    <ligand>
        <name>S-adenosyl-L-methionine</name>
        <dbReference type="ChEBI" id="CHEBI:59789"/>
    </ligand>
</feature>
<feature type="binding site" evidence="1">
    <location>
        <position position="110"/>
    </location>
    <ligand>
        <name>S-adenosyl-L-methionine</name>
        <dbReference type="ChEBI" id="CHEBI:59789"/>
    </ligand>
</feature>
<feature type="binding site" evidence="1">
    <location>
        <position position="131"/>
    </location>
    <ligand>
        <name>S-adenosyl-L-methionine</name>
        <dbReference type="ChEBI" id="CHEBI:59789"/>
    </ligand>
</feature>
<feature type="binding site" evidence="1">
    <location>
        <position position="138"/>
    </location>
    <ligand>
        <name>S-adenosyl-L-methionine</name>
        <dbReference type="ChEBI" id="CHEBI:59789"/>
    </ligand>
</feature>
<protein>
    <recommendedName>
        <fullName evidence="1">Ribosomal RNA small subunit methyltransferase H</fullName>
        <ecNumber evidence="1">2.1.1.199</ecNumber>
    </recommendedName>
    <alternativeName>
        <fullName evidence="1">16S rRNA m(4)C1402 methyltransferase</fullName>
    </alternativeName>
    <alternativeName>
        <fullName evidence="1">rRNA (cytosine-N(4)-)-methyltransferase RsmH</fullName>
    </alternativeName>
</protein>
<evidence type="ECO:0000255" key="1">
    <source>
        <dbReference type="HAMAP-Rule" id="MF_01007"/>
    </source>
</evidence>
<evidence type="ECO:0000256" key="2">
    <source>
        <dbReference type="SAM" id="MobiDB-lite"/>
    </source>
</evidence>
<comment type="function">
    <text evidence="1">Specifically methylates the N4 position of cytidine in position 1402 (C1402) of 16S rRNA.</text>
</comment>
<comment type="catalytic activity">
    <reaction evidence="1">
        <text>cytidine(1402) in 16S rRNA + S-adenosyl-L-methionine = N(4)-methylcytidine(1402) in 16S rRNA + S-adenosyl-L-homocysteine + H(+)</text>
        <dbReference type="Rhea" id="RHEA:42928"/>
        <dbReference type="Rhea" id="RHEA-COMP:10286"/>
        <dbReference type="Rhea" id="RHEA-COMP:10287"/>
        <dbReference type="ChEBI" id="CHEBI:15378"/>
        <dbReference type="ChEBI" id="CHEBI:57856"/>
        <dbReference type="ChEBI" id="CHEBI:59789"/>
        <dbReference type="ChEBI" id="CHEBI:74506"/>
        <dbReference type="ChEBI" id="CHEBI:82748"/>
        <dbReference type="EC" id="2.1.1.199"/>
    </reaction>
</comment>
<comment type="subcellular location">
    <subcellularLocation>
        <location evidence="1">Cytoplasm</location>
    </subcellularLocation>
</comment>
<comment type="similarity">
    <text evidence="1">Belongs to the methyltransferase superfamily. RsmH family.</text>
</comment>